<keyword id="KW-0687">Ribonucleoprotein</keyword>
<keyword id="KW-0689">Ribosomal protein</keyword>
<keyword id="KW-0694">RNA-binding</keyword>
<keyword id="KW-0699">rRNA-binding</keyword>
<feature type="chain" id="PRO_1000055222" description="Large ribosomal subunit protein uL6">
    <location>
        <begin position="1"/>
        <end position="180"/>
    </location>
</feature>
<gene>
    <name evidence="1" type="primary">rplF</name>
    <name type="ordered locus">CLI_3648</name>
</gene>
<evidence type="ECO:0000255" key="1">
    <source>
        <dbReference type="HAMAP-Rule" id="MF_01365"/>
    </source>
</evidence>
<evidence type="ECO:0000305" key="2"/>
<accession>A7GJ59</accession>
<sequence length="180" mass="19499">MSRVGKLPVAIPNGVTVTVTPDNVVTVKGPKGELAKAMSNKINIAVEDNSVVVTRDNDHKDVRALHGLTRALINNMVTGVNEGYVKTLELVGVGYRAQLQGKKLVLSLGFSHPVEMEAVSGVEFEVEGGTKVKVKGIDKELVGAVAADIRKWRKPEPYKGKGIKYENEVIRRKEGKTGKK</sequence>
<name>RL6_CLOBL</name>
<reference key="1">
    <citation type="submission" date="2007-06" db="EMBL/GenBank/DDBJ databases">
        <authorList>
            <person name="Brinkac L.M."/>
            <person name="Daugherty S."/>
            <person name="Dodson R.J."/>
            <person name="Madupu R."/>
            <person name="Brown J.L."/>
            <person name="Bruce D."/>
            <person name="Detter C."/>
            <person name="Munk C."/>
            <person name="Smith L.A."/>
            <person name="Smith T.J."/>
            <person name="White O."/>
            <person name="Brettin T.S."/>
        </authorList>
    </citation>
    <scope>NUCLEOTIDE SEQUENCE [LARGE SCALE GENOMIC DNA]</scope>
    <source>
        <strain>Langeland / NCTC 10281 / Type F</strain>
    </source>
</reference>
<comment type="function">
    <text evidence="1">This protein binds to the 23S rRNA, and is important in its secondary structure. It is located near the subunit interface in the base of the L7/L12 stalk, and near the tRNA binding site of the peptidyltransferase center.</text>
</comment>
<comment type="subunit">
    <text evidence="1">Part of the 50S ribosomal subunit.</text>
</comment>
<comment type="similarity">
    <text evidence="1">Belongs to the universal ribosomal protein uL6 family.</text>
</comment>
<dbReference type="EMBL" id="CP000728">
    <property type="protein sequence ID" value="ABS40071.1"/>
    <property type="molecule type" value="Genomic_DNA"/>
</dbReference>
<dbReference type="RefSeq" id="WP_012101131.1">
    <property type="nucleotide sequence ID" value="NC_009699.1"/>
</dbReference>
<dbReference type="SMR" id="A7GJ59"/>
<dbReference type="KEGG" id="cbf:CLI_3648"/>
<dbReference type="HOGENOM" id="CLU_065464_1_2_9"/>
<dbReference type="Proteomes" id="UP000002410">
    <property type="component" value="Chromosome"/>
</dbReference>
<dbReference type="GO" id="GO:0022625">
    <property type="term" value="C:cytosolic large ribosomal subunit"/>
    <property type="evidence" value="ECO:0007669"/>
    <property type="project" value="TreeGrafter"/>
</dbReference>
<dbReference type="GO" id="GO:0019843">
    <property type="term" value="F:rRNA binding"/>
    <property type="evidence" value="ECO:0007669"/>
    <property type="project" value="UniProtKB-UniRule"/>
</dbReference>
<dbReference type="GO" id="GO:0003735">
    <property type="term" value="F:structural constituent of ribosome"/>
    <property type="evidence" value="ECO:0007669"/>
    <property type="project" value="InterPro"/>
</dbReference>
<dbReference type="GO" id="GO:0002181">
    <property type="term" value="P:cytoplasmic translation"/>
    <property type="evidence" value="ECO:0007669"/>
    <property type="project" value="TreeGrafter"/>
</dbReference>
<dbReference type="FunFam" id="3.90.930.12:FF:000001">
    <property type="entry name" value="50S ribosomal protein L6"/>
    <property type="match status" value="1"/>
</dbReference>
<dbReference type="FunFam" id="3.90.930.12:FF:000002">
    <property type="entry name" value="50S ribosomal protein L6"/>
    <property type="match status" value="1"/>
</dbReference>
<dbReference type="Gene3D" id="3.90.930.12">
    <property type="entry name" value="Ribosomal protein L6, alpha-beta domain"/>
    <property type="match status" value="2"/>
</dbReference>
<dbReference type="HAMAP" id="MF_01365_B">
    <property type="entry name" value="Ribosomal_uL6_B"/>
    <property type="match status" value="1"/>
</dbReference>
<dbReference type="InterPro" id="IPR000702">
    <property type="entry name" value="Ribosomal_uL6-like"/>
</dbReference>
<dbReference type="InterPro" id="IPR036789">
    <property type="entry name" value="Ribosomal_uL6-like_a/b-dom_sf"/>
</dbReference>
<dbReference type="InterPro" id="IPR020040">
    <property type="entry name" value="Ribosomal_uL6_a/b-dom"/>
</dbReference>
<dbReference type="InterPro" id="IPR019906">
    <property type="entry name" value="Ribosomal_uL6_bac-type"/>
</dbReference>
<dbReference type="InterPro" id="IPR002358">
    <property type="entry name" value="Ribosomal_uL6_CS"/>
</dbReference>
<dbReference type="NCBIfam" id="TIGR03654">
    <property type="entry name" value="L6_bact"/>
    <property type="match status" value="1"/>
</dbReference>
<dbReference type="PANTHER" id="PTHR11655">
    <property type="entry name" value="60S/50S RIBOSOMAL PROTEIN L6/L9"/>
    <property type="match status" value="1"/>
</dbReference>
<dbReference type="PANTHER" id="PTHR11655:SF14">
    <property type="entry name" value="LARGE RIBOSOMAL SUBUNIT PROTEIN UL6M"/>
    <property type="match status" value="1"/>
</dbReference>
<dbReference type="Pfam" id="PF00347">
    <property type="entry name" value="Ribosomal_L6"/>
    <property type="match status" value="2"/>
</dbReference>
<dbReference type="PIRSF" id="PIRSF002162">
    <property type="entry name" value="Ribosomal_L6"/>
    <property type="match status" value="1"/>
</dbReference>
<dbReference type="PRINTS" id="PR00059">
    <property type="entry name" value="RIBOSOMALL6"/>
</dbReference>
<dbReference type="SUPFAM" id="SSF56053">
    <property type="entry name" value="Ribosomal protein L6"/>
    <property type="match status" value="2"/>
</dbReference>
<dbReference type="PROSITE" id="PS00525">
    <property type="entry name" value="RIBOSOMAL_L6_1"/>
    <property type="match status" value="1"/>
</dbReference>
<protein>
    <recommendedName>
        <fullName evidence="1">Large ribosomal subunit protein uL6</fullName>
    </recommendedName>
    <alternativeName>
        <fullName evidence="2">50S ribosomal protein L6</fullName>
    </alternativeName>
</protein>
<organism>
    <name type="scientific">Clostridium botulinum (strain Langeland / NCTC 10281 / Type F)</name>
    <dbReference type="NCBI Taxonomy" id="441772"/>
    <lineage>
        <taxon>Bacteria</taxon>
        <taxon>Bacillati</taxon>
        <taxon>Bacillota</taxon>
        <taxon>Clostridia</taxon>
        <taxon>Eubacteriales</taxon>
        <taxon>Clostridiaceae</taxon>
        <taxon>Clostridium</taxon>
    </lineage>
</organism>
<proteinExistence type="inferred from homology"/>